<feature type="chain" id="PRO_0000071981" description="Small muscular protein">
    <location>
        <begin position="1"/>
        <end position="85"/>
    </location>
</feature>
<feature type="region of interest" description="Disordered" evidence="2">
    <location>
        <begin position="19"/>
        <end position="63"/>
    </location>
</feature>
<feature type="modified residue" description="Phosphoserine" evidence="4">
    <location>
        <position position="36"/>
    </location>
</feature>
<feature type="modified residue" description="Phosphothreonine" evidence="4">
    <location>
        <position position="47"/>
    </location>
</feature>
<organism>
    <name type="scientific">Rattus norvegicus</name>
    <name type="common">Rat</name>
    <dbReference type="NCBI Taxonomy" id="10116"/>
    <lineage>
        <taxon>Eukaryota</taxon>
        <taxon>Metazoa</taxon>
        <taxon>Chordata</taxon>
        <taxon>Craniata</taxon>
        <taxon>Vertebrata</taxon>
        <taxon>Euteleostomi</taxon>
        <taxon>Mammalia</taxon>
        <taxon>Eutheria</taxon>
        <taxon>Euarchontoglires</taxon>
        <taxon>Glires</taxon>
        <taxon>Rodentia</taxon>
        <taxon>Myomorpha</taxon>
        <taxon>Muroidea</taxon>
        <taxon>Muridae</taxon>
        <taxon>Murinae</taxon>
        <taxon>Rattus</taxon>
    </lineage>
</organism>
<reference key="1">
    <citation type="journal article" date="1999" name="Hum. Genet.">
        <title>Identification, mapping, and genomic structure of a novel X-chromosomal human gene (SMPX) encoding a small muscular protein.</title>
        <authorList>
            <person name="Patzak D."/>
            <person name="Zhuchenko O."/>
            <person name="Lee C.-C."/>
            <person name="Wehnert M."/>
        </authorList>
    </citation>
    <scope>NUCLEOTIDE SEQUENCE [MRNA]</scope>
</reference>
<reference key="2">
    <citation type="journal article" date="2012" name="Nat. Commun.">
        <title>Quantitative maps of protein phosphorylation sites across 14 different rat organs and tissues.</title>
        <authorList>
            <person name="Lundby A."/>
            <person name="Secher A."/>
            <person name="Lage K."/>
            <person name="Nordsborg N.B."/>
            <person name="Dmytriyev A."/>
            <person name="Lundby C."/>
            <person name="Olsen J.V."/>
        </authorList>
    </citation>
    <scope>PHOSPHORYLATION [LARGE SCALE ANALYSIS] AT SER-36 AND THR-47</scope>
    <scope>IDENTIFICATION BY MASS SPECTROMETRY [LARGE SCALE ANALYSIS]</scope>
</reference>
<proteinExistence type="evidence at protein level"/>
<keyword id="KW-0597">Phosphoprotein</keyword>
<keyword id="KW-1185">Reference proteome</keyword>
<comment type="function">
    <text evidence="1">Plays a role in the regulatory network through which muscle cells coordinate their structural and functional states during growth, adaptation, and repair.</text>
</comment>
<comment type="similarity">
    <text evidence="3">Belongs to the SMPX family.</text>
</comment>
<name>SMPX_RAT</name>
<sequence>MSKQPISNVRSIQANINIPMGAFRPGAGQPPRRKESTPGTAEGAPATPEEKKPVPGMKKFPGPVVNLSEIQNVKSELKYVPKGEQ</sequence>
<evidence type="ECO:0000250" key="1"/>
<evidence type="ECO:0000256" key="2">
    <source>
        <dbReference type="SAM" id="MobiDB-lite"/>
    </source>
</evidence>
<evidence type="ECO:0000305" key="3"/>
<evidence type="ECO:0007744" key="4">
    <source>
    </source>
</evidence>
<accession>Q925F0</accession>
<protein>
    <recommendedName>
        <fullName>Small muscular protein</fullName>
    </recommendedName>
    <alternativeName>
        <fullName>Stretch-responsive skeletal muscle protein</fullName>
    </alternativeName>
</protein>
<dbReference type="EMBL" id="AF364071">
    <property type="protein sequence ID" value="AAK50399.1"/>
    <property type="molecule type" value="mRNA"/>
</dbReference>
<dbReference type="RefSeq" id="NP_445847.1">
    <property type="nucleotide sequence ID" value="NM_053395.1"/>
</dbReference>
<dbReference type="RefSeq" id="XP_006257007.1">
    <property type="nucleotide sequence ID" value="XM_006256945.5"/>
</dbReference>
<dbReference type="FunCoup" id="Q925F0">
    <property type="interactions" value="2"/>
</dbReference>
<dbReference type="STRING" id="10116.ENSRNOP00000010027"/>
<dbReference type="GlyGen" id="Q925F0">
    <property type="glycosylation" value="1 site"/>
</dbReference>
<dbReference type="iPTMnet" id="Q925F0"/>
<dbReference type="PhosphoSitePlus" id="Q925F0"/>
<dbReference type="PaxDb" id="10116-ENSRNOP00000010027"/>
<dbReference type="GeneID" id="84416"/>
<dbReference type="KEGG" id="rno:84416"/>
<dbReference type="AGR" id="RGD:69233"/>
<dbReference type="CTD" id="23676"/>
<dbReference type="RGD" id="69233">
    <property type="gene designation" value="Smpx"/>
</dbReference>
<dbReference type="VEuPathDB" id="HostDB:ENSRNOG00000007495"/>
<dbReference type="eggNOG" id="ENOG502S62J">
    <property type="taxonomic scope" value="Eukaryota"/>
</dbReference>
<dbReference type="HOGENOM" id="CLU_2512070_0_0_1"/>
<dbReference type="InParanoid" id="Q925F0"/>
<dbReference type="OrthoDB" id="79294at9989"/>
<dbReference type="PhylomeDB" id="Q925F0"/>
<dbReference type="TreeFam" id="TF338181"/>
<dbReference type="PRO" id="PR:Q925F0"/>
<dbReference type="Proteomes" id="UP000002494">
    <property type="component" value="Chromosome X"/>
</dbReference>
<dbReference type="Bgee" id="ENSRNOG00000007495">
    <property type="expression patterns" value="Expressed in heart and 17 other cell types or tissues"/>
</dbReference>
<dbReference type="GO" id="GO:0043292">
    <property type="term" value="C:contractile muscle fiber"/>
    <property type="evidence" value="ECO:0000266"/>
    <property type="project" value="RGD"/>
</dbReference>
<dbReference type="GO" id="GO:0043034">
    <property type="term" value="C:costamere"/>
    <property type="evidence" value="ECO:0000266"/>
    <property type="project" value="RGD"/>
</dbReference>
<dbReference type="GO" id="GO:0005737">
    <property type="term" value="C:cytoplasm"/>
    <property type="evidence" value="ECO:0000266"/>
    <property type="project" value="RGD"/>
</dbReference>
<dbReference type="GO" id="GO:0031430">
    <property type="term" value="C:M band"/>
    <property type="evidence" value="ECO:0000266"/>
    <property type="project" value="RGD"/>
</dbReference>
<dbReference type="GO" id="GO:0005927">
    <property type="term" value="C:muscle tendon junction"/>
    <property type="evidence" value="ECO:0000266"/>
    <property type="project" value="RGD"/>
</dbReference>
<dbReference type="GO" id="GO:0005634">
    <property type="term" value="C:nucleus"/>
    <property type="evidence" value="ECO:0000266"/>
    <property type="project" value="RGD"/>
</dbReference>
<dbReference type="InterPro" id="IPR029268">
    <property type="entry name" value="Chisel"/>
</dbReference>
<dbReference type="PANTHER" id="PTHR17416">
    <property type="entry name" value="SMALL MUSCULAR PROTEIN"/>
    <property type="match status" value="1"/>
</dbReference>
<dbReference type="PANTHER" id="PTHR17416:SF0">
    <property type="entry name" value="SMALL MUSCULAR PROTEIN"/>
    <property type="match status" value="1"/>
</dbReference>
<dbReference type="Pfam" id="PF15355">
    <property type="entry name" value="Chisel"/>
    <property type="match status" value="1"/>
</dbReference>
<gene>
    <name type="primary">Smpx</name>
    <name type="synonym">Srmx</name>
</gene>